<dbReference type="EMBL" id="BA000028">
    <property type="protein sequence ID" value="BAC12509.1"/>
    <property type="molecule type" value="Genomic_DNA"/>
</dbReference>
<dbReference type="RefSeq" id="WP_011064956.1">
    <property type="nucleotide sequence ID" value="NC_004193.1"/>
</dbReference>
<dbReference type="SMR" id="Q8CXM7"/>
<dbReference type="STRING" id="221109.gene:10732757"/>
<dbReference type="KEGG" id="oih:OB0553"/>
<dbReference type="eggNOG" id="COG3705">
    <property type="taxonomic scope" value="Bacteria"/>
</dbReference>
<dbReference type="HOGENOM" id="CLU_025113_0_2_9"/>
<dbReference type="OrthoDB" id="9800814at2"/>
<dbReference type="PhylomeDB" id="Q8CXM7"/>
<dbReference type="UniPathway" id="UPA00031">
    <property type="reaction ID" value="UER00006"/>
</dbReference>
<dbReference type="Proteomes" id="UP000000822">
    <property type="component" value="Chromosome"/>
</dbReference>
<dbReference type="GO" id="GO:0005737">
    <property type="term" value="C:cytoplasm"/>
    <property type="evidence" value="ECO:0007669"/>
    <property type="project" value="UniProtKB-SubCell"/>
</dbReference>
<dbReference type="GO" id="GO:0140096">
    <property type="term" value="F:catalytic activity, acting on a protein"/>
    <property type="evidence" value="ECO:0007669"/>
    <property type="project" value="UniProtKB-ARBA"/>
</dbReference>
<dbReference type="GO" id="GO:0004821">
    <property type="term" value="F:histidine-tRNA ligase activity"/>
    <property type="evidence" value="ECO:0007669"/>
    <property type="project" value="TreeGrafter"/>
</dbReference>
<dbReference type="GO" id="GO:0016740">
    <property type="term" value="F:transferase activity"/>
    <property type="evidence" value="ECO:0007669"/>
    <property type="project" value="UniProtKB-ARBA"/>
</dbReference>
<dbReference type="GO" id="GO:0006427">
    <property type="term" value="P:histidyl-tRNA aminoacylation"/>
    <property type="evidence" value="ECO:0007669"/>
    <property type="project" value="TreeGrafter"/>
</dbReference>
<dbReference type="GO" id="GO:0000105">
    <property type="term" value="P:L-histidine biosynthetic process"/>
    <property type="evidence" value="ECO:0007669"/>
    <property type="project" value="UniProtKB-UniRule"/>
</dbReference>
<dbReference type="CDD" id="cd00773">
    <property type="entry name" value="HisRS-like_core"/>
    <property type="match status" value="1"/>
</dbReference>
<dbReference type="Gene3D" id="3.30.930.10">
    <property type="entry name" value="Bira Bifunctional Protein, Domain 2"/>
    <property type="match status" value="1"/>
</dbReference>
<dbReference type="HAMAP" id="MF_00125">
    <property type="entry name" value="HisZ"/>
    <property type="match status" value="1"/>
</dbReference>
<dbReference type="InterPro" id="IPR045864">
    <property type="entry name" value="aa-tRNA-synth_II/BPL/LPL"/>
</dbReference>
<dbReference type="InterPro" id="IPR041715">
    <property type="entry name" value="HisRS-like_core"/>
</dbReference>
<dbReference type="InterPro" id="IPR004516">
    <property type="entry name" value="HisRS/HisZ"/>
</dbReference>
<dbReference type="InterPro" id="IPR004517">
    <property type="entry name" value="HisZ"/>
</dbReference>
<dbReference type="NCBIfam" id="TIGR00443">
    <property type="entry name" value="hisZ_biosyn_reg"/>
    <property type="match status" value="1"/>
</dbReference>
<dbReference type="PANTHER" id="PTHR43707:SF6">
    <property type="entry name" value="ATP PHOSPHORIBOSYLTRANSFERASE REGULATORY SUBUNIT"/>
    <property type="match status" value="1"/>
</dbReference>
<dbReference type="PANTHER" id="PTHR43707">
    <property type="entry name" value="HISTIDYL-TRNA SYNTHETASE"/>
    <property type="match status" value="1"/>
</dbReference>
<dbReference type="Pfam" id="PF13393">
    <property type="entry name" value="tRNA-synt_His"/>
    <property type="match status" value="1"/>
</dbReference>
<dbReference type="PIRSF" id="PIRSF001549">
    <property type="entry name" value="His-tRNA_synth"/>
    <property type="match status" value="1"/>
</dbReference>
<dbReference type="SUPFAM" id="SSF55681">
    <property type="entry name" value="Class II aaRS and biotin synthetases"/>
    <property type="match status" value="1"/>
</dbReference>
<feature type="chain" id="PRO_0000171048" description="ATP phosphoribosyltransferase regulatory subunit">
    <location>
        <begin position="1"/>
        <end position="405"/>
    </location>
</feature>
<reference key="1">
    <citation type="journal article" date="2002" name="Nucleic Acids Res.">
        <title>Genome sequence of Oceanobacillus iheyensis isolated from the Iheya Ridge and its unexpected adaptive capabilities to extreme environments.</title>
        <authorList>
            <person name="Takami H."/>
            <person name="Takaki Y."/>
            <person name="Uchiyama I."/>
        </authorList>
    </citation>
    <scope>NUCLEOTIDE SEQUENCE [LARGE SCALE GENOMIC DNA]</scope>
    <source>
        <strain>DSM 14371 / CIP 107618 / JCM 11309 / KCTC 3954 / HTE831</strain>
    </source>
</reference>
<gene>
    <name evidence="1" type="primary">hisZ</name>
    <name type="ordered locus">OB0553</name>
</gene>
<sequence>MINYNFRNRTSFPEDFLKKANVIKQIQNRFYTYGYDQIETPLFEDYDMYSNVQGTVQQDDMVKVIHSSGRVLVLRPDVTIPITRQYVETDMTSHYQRFSYCLDIFRFNETQQAYRTQAGVEFFGDESPEADAEVIALAIDSLKDLKIAPFKIEIGHSGIYKELLEQANLTDQEQQTLHALIQSKNISETSSFLDHLSIDQDLKQKIELIPMLYGDPSTVIKRAQAIVTNETMQQVVDTLFNVYSLLKDDQIEEYISFNLGLINNMNYYSGIIFQGFTEQIGQPILMGGRYDHLSSQFENEIPAVGFAFEIDKLLTLITPGDQPLITQADFLIEYQPNCRQDALLLARRLRQANKKVIIQPTESSSKIKASNIILVDSNSYQLKSSDIQTTFSSIDQTLQHVLKKR</sequence>
<comment type="function">
    <text evidence="1">Required for the first step of histidine biosynthesis. May allow the feedback regulation of ATP phosphoribosyltransferase activity by histidine.</text>
</comment>
<comment type="pathway">
    <text evidence="1">Amino-acid biosynthesis; L-histidine biosynthesis; L-histidine from 5-phospho-alpha-D-ribose 1-diphosphate: step 1/9.</text>
</comment>
<comment type="subunit">
    <text evidence="1">Heteromultimer composed of HisG and HisZ subunits.</text>
</comment>
<comment type="subcellular location">
    <subcellularLocation>
        <location evidence="1">Cytoplasm</location>
    </subcellularLocation>
</comment>
<comment type="miscellaneous">
    <text>This function is generally fulfilled by the C-terminal part of HisG, which is missing in some bacteria such as this one.</text>
</comment>
<comment type="similarity">
    <text evidence="1">Belongs to the class-II aminoacyl-tRNA synthetase family. HisZ subfamily.</text>
</comment>
<accession>Q8CXM7</accession>
<keyword id="KW-0028">Amino-acid biosynthesis</keyword>
<keyword id="KW-0963">Cytoplasm</keyword>
<keyword id="KW-0368">Histidine biosynthesis</keyword>
<keyword id="KW-1185">Reference proteome</keyword>
<name>HISZ_OCEIH</name>
<proteinExistence type="inferred from homology"/>
<protein>
    <recommendedName>
        <fullName evidence="1">ATP phosphoribosyltransferase regulatory subunit</fullName>
    </recommendedName>
</protein>
<organism>
    <name type="scientific">Oceanobacillus iheyensis (strain DSM 14371 / CIP 107618 / JCM 11309 / KCTC 3954 / HTE831)</name>
    <dbReference type="NCBI Taxonomy" id="221109"/>
    <lineage>
        <taxon>Bacteria</taxon>
        <taxon>Bacillati</taxon>
        <taxon>Bacillota</taxon>
        <taxon>Bacilli</taxon>
        <taxon>Bacillales</taxon>
        <taxon>Bacillaceae</taxon>
        <taxon>Oceanobacillus</taxon>
    </lineage>
</organism>
<evidence type="ECO:0000255" key="1">
    <source>
        <dbReference type="HAMAP-Rule" id="MF_00125"/>
    </source>
</evidence>